<protein>
    <recommendedName>
        <fullName evidence="1">Ribonuclease Z</fullName>
        <shortName evidence="1">RNase Z</shortName>
        <ecNumber evidence="1">3.1.26.11</ecNumber>
    </recommendedName>
    <alternativeName>
        <fullName evidence="1">tRNA 3 endonuclease</fullName>
    </alternativeName>
    <alternativeName>
        <fullName evidence="1">tRNase Z</fullName>
    </alternativeName>
</protein>
<gene>
    <name evidence="1" type="primary">rnz</name>
    <name type="ordered locus">OE_4141R</name>
</gene>
<name>RNZ_HALS3</name>
<feature type="chain" id="PRO_1000187963" description="Ribonuclease Z">
    <location>
        <begin position="1"/>
        <end position="308"/>
    </location>
</feature>
<feature type="active site" description="Proton acceptor" evidence="1">
    <location>
        <position position="65"/>
    </location>
</feature>
<feature type="binding site" evidence="1">
    <location>
        <position position="61"/>
    </location>
    <ligand>
        <name>Zn(2+)</name>
        <dbReference type="ChEBI" id="CHEBI:29105"/>
        <label>1</label>
        <note>catalytic</note>
    </ligand>
</feature>
<feature type="binding site" evidence="1">
    <location>
        <position position="63"/>
    </location>
    <ligand>
        <name>Zn(2+)</name>
        <dbReference type="ChEBI" id="CHEBI:29105"/>
        <label>1</label>
        <note>catalytic</note>
    </ligand>
</feature>
<feature type="binding site" evidence="1">
    <location>
        <position position="65"/>
    </location>
    <ligand>
        <name>Zn(2+)</name>
        <dbReference type="ChEBI" id="CHEBI:29105"/>
        <label>2</label>
        <note>catalytic</note>
    </ligand>
</feature>
<feature type="binding site" evidence="1">
    <location>
        <position position="66"/>
    </location>
    <ligand>
        <name>Zn(2+)</name>
        <dbReference type="ChEBI" id="CHEBI:29105"/>
        <label>2</label>
        <note>catalytic</note>
    </ligand>
</feature>
<feature type="binding site" evidence="1">
    <location>
        <position position="139"/>
    </location>
    <ligand>
        <name>Zn(2+)</name>
        <dbReference type="ChEBI" id="CHEBI:29105"/>
        <label>1</label>
        <note>catalytic</note>
    </ligand>
</feature>
<feature type="binding site" evidence="1">
    <location>
        <position position="210"/>
    </location>
    <ligand>
        <name>Zn(2+)</name>
        <dbReference type="ChEBI" id="CHEBI:29105"/>
        <label>1</label>
        <note>catalytic</note>
    </ligand>
</feature>
<feature type="binding site" evidence="1">
    <location>
        <position position="210"/>
    </location>
    <ligand>
        <name>Zn(2+)</name>
        <dbReference type="ChEBI" id="CHEBI:29105"/>
        <label>2</label>
        <note>catalytic</note>
    </ligand>
</feature>
<feature type="binding site" evidence="1">
    <location>
        <position position="268"/>
    </location>
    <ligand>
        <name>Zn(2+)</name>
        <dbReference type="ChEBI" id="CHEBI:29105"/>
        <label>2</label>
        <note>catalytic</note>
    </ligand>
</feature>
<evidence type="ECO:0000255" key="1">
    <source>
        <dbReference type="HAMAP-Rule" id="MF_01818"/>
    </source>
</evidence>
<proteinExistence type="inferred from homology"/>
<organism>
    <name type="scientific">Halobacterium salinarum (strain ATCC 29341 / DSM 671 / R1)</name>
    <dbReference type="NCBI Taxonomy" id="478009"/>
    <lineage>
        <taxon>Archaea</taxon>
        <taxon>Methanobacteriati</taxon>
        <taxon>Methanobacteriota</taxon>
        <taxon>Stenosarchaea group</taxon>
        <taxon>Halobacteria</taxon>
        <taxon>Halobacteriales</taxon>
        <taxon>Halobacteriaceae</taxon>
        <taxon>Halobacterium</taxon>
        <taxon>Halobacterium salinarum NRC-34001</taxon>
    </lineage>
</organism>
<comment type="function">
    <text evidence="1">Zinc phosphodiesterase, which displays some tRNA 3'-processing endonuclease activity. Probably involved in tRNA maturation, by removing a 3'-trailer from precursor tRNA.</text>
</comment>
<comment type="catalytic activity">
    <reaction evidence="1">
        <text>Endonucleolytic cleavage of RNA, removing extra 3' nucleotides from tRNA precursor, generating 3' termini of tRNAs. A 3'-hydroxy group is left at the tRNA terminus and a 5'-phosphoryl group is left at the trailer molecule.</text>
        <dbReference type="EC" id="3.1.26.11"/>
    </reaction>
</comment>
<comment type="cofactor">
    <cofactor evidence="1">
        <name>Zn(2+)</name>
        <dbReference type="ChEBI" id="CHEBI:29105"/>
    </cofactor>
    <text evidence="1">Binds 2 Zn(2+) ions.</text>
</comment>
<comment type="subunit">
    <text evidence="1">Homodimer.</text>
</comment>
<comment type="similarity">
    <text evidence="1">Belongs to the RNase Z family.</text>
</comment>
<accession>B0R7E2</accession>
<reference key="1">
    <citation type="journal article" date="2008" name="Genomics">
        <title>Evolution in the laboratory: the genome of Halobacterium salinarum strain R1 compared to that of strain NRC-1.</title>
        <authorList>
            <person name="Pfeiffer F."/>
            <person name="Schuster S.C."/>
            <person name="Broicher A."/>
            <person name="Falb M."/>
            <person name="Palm P."/>
            <person name="Rodewald K."/>
            <person name="Ruepp A."/>
            <person name="Soppa J."/>
            <person name="Tittor J."/>
            <person name="Oesterhelt D."/>
        </authorList>
    </citation>
    <scope>NUCLEOTIDE SEQUENCE [LARGE SCALE GENOMIC DNA]</scope>
    <source>
        <strain>ATCC 29341 / DSM 671 / R1</strain>
    </source>
</reference>
<keyword id="KW-0255">Endonuclease</keyword>
<keyword id="KW-0378">Hydrolase</keyword>
<keyword id="KW-0479">Metal-binding</keyword>
<keyword id="KW-0540">Nuclease</keyword>
<keyword id="KW-0819">tRNA processing</keyword>
<keyword id="KW-0862">Zinc</keyword>
<dbReference type="EC" id="3.1.26.11" evidence="1"/>
<dbReference type="EMBL" id="AM774415">
    <property type="protein sequence ID" value="CAP14661.1"/>
    <property type="molecule type" value="Genomic_DNA"/>
</dbReference>
<dbReference type="RefSeq" id="WP_010903662.1">
    <property type="nucleotide sequence ID" value="NC_010364.1"/>
</dbReference>
<dbReference type="SMR" id="B0R7E2"/>
<dbReference type="EnsemblBacteria" id="CAP14661">
    <property type="protein sequence ID" value="CAP14661"/>
    <property type="gene ID" value="OE_4141R"/>
</dbReference>
<dbReference type="GeneID" id="68694792"/>
<dbReference type="KEGG" id="hsl:OE_4141R"/>
<dbReference type="HOGENOM" id="CLU_031317_2_1_2"/>
<dbReference type="PhylomeDB" id="B0R7E2"/>
<dbReference type="Proteomes" id="UP000001321">
    <property type="component" value="Chromosome"/>
</dbReference>
<dbReference type="GO" id="GO:0042781">
    <property type="term" value="F:3'-tRNA processing endoribonuclease activity"/>
    <property type="evidence" value="ECO:0007669"/>
    <property type="project" value="UniProtKB-UniRule"/>
</dbReference>
<dbReference type="GO" id="GO:0008270">
    <property type="term" value="F:zinc ion binding"/>
    <property type="evidence" value="ECO:0007669"/>
    <property type="project" value="UniProtKB-UniRule"/>
</dbReference>
<dbReference type="CDD" id="cd07717">
    <property type="entry name" value="RNaseZ_ZiPD-like_MBL-fold"/>
    <property type="match status" value="1"/>
</dbReference>
<dbReference type="FunFam" id="3.60.15.10:FF:000002">
    <property type="entry name" value="Ribonuclease Z"/>
    <property type="match status" value="1"/>
</dbReference>
<dbReference type="Gene3D" id="3.60.15.10">
    <property type="entry name" value="Ribonuclease Z/Hydroxyacylglutathione hydrolase-like"/>
    <property type="match status" value="1"/>
</dbReference>
<dbReference type="HAMAP" id="MF_01818">
    <property type="entry name" value="RNase_Z_BN"/>
    <property type="match status" value="1"/>
</dbReference>
<dbReference type="InterPro" id="IPR001279">
    <property type="entry name" value="Metallo-B-lactamas"/>
</dbReference>
<dbReference type="InterPro" id="IPR036866">
    <property type="entry name" value="RibonucZ/Hydroxyglut_hydro"/>
</dbReference>
<dbReference type="InterPro" id="IPR013471">
    <property type="entry name" value="RNase_Z/BN"/>
</dbReference>
<dbReference type="NCBIfam" id="NF000801">
    <property type="entry name" value="PRK00055.1-3"/>
    <property type="match status" value="1"/>
</dbReference>
<dbReference type="NCBIfam" id="TIGR02651">
    <property type="entry name" value="RNase_Z"/>
    <property type="match status" value="1"/>
</dbReference>
<dbReference type="PANTHER" id="PTHR46018">
    <property type="entry name" value="ZINC PHOSPHODIESTERASE ELAC PROTEIN 1"/>
    <property type="match status" value="1"/>
</dbReference>
<dbReference type="PANTHER" id="PTHR46018:SF2">
    <property type="entry name" value="ZINC PHOSPHODIESTERASE ELAC PROTEIN 1"/>
    <property type="match status" value="1"/>
</dbReference>
<dbReference type="Pfam" id="PF00753">
    <property type="entry name" value="Lactamase_B"/>
    <property type="match status" value="1"/>
</dbReference>
<dbReference type="Pfam" id="PF12706">
    <property type="entry name" value="Lactamase_B_2"/>
    <property type="match status" value="1"/>
</dbReference>
<dbReference type="SMART" id="SM00849">
    <property type="entry name" value="Lactamase_B"/>
    <property type="match status" value="1"/>
</dbReference>
<dbReference type="SUPFAM" id="SSF56281">
    <property type="entry name" value="Metallo-hydrolase/oxidoreductase"/>
    <property type="match status" value="1"/>
</dbReference>
<sequence>MTLEVTFLGTSGAVPTTERNPSSVFVRRNGDAFLFDAGEATQRQMMRYKTGFGVSDVFITHGHGDHVFGLPGLVHTWDFNDRTDPLTIHVPRGLRGDIEDLVFSAGGDVGYPVRITEATPGAVVRSHDDYEVRAFETAHSTASVGYALVEDDRTGRFDRARAEELGVPVGPKFSTLHDGQPVELDDGTVVSPEQVVGDPRPGRTLVYTGDTRPHDPVVSAAEDADLLIHDATFANDASERAAETGHSTAGEAADVATEAGAKALALTHVSSRYAGDASEISAGASGFDGEAFVAHDGLTHEIPFPDAD</sequence>